<comment type="function">
    <text evidence="1">Required for the regulation of both a MAP kinase signaling pathway and a cAMP signaling pathway. The activation of these pathways contributes to the pathogenicity of the cells through the induction of the morphological transition from the yeast to the polarized filamentous form (By similarity).</text>
</comment>
<comment type="activity regulation">
    <text>Alternates between an inactive form bound to GDP and an active form bound to GTP. Activated by a guanine nucleotide-exchange factor (GEF) and inactivated by a GTPase-activating protein (GAP).</text>
</comment>
<comment type="subcellular location">
    <subcellularLocation>
        <location evidence="3">Cell membrane</location>
        <topology evidence="3">Lipid-anchor</topology>
        <orientation evidence="3">Cytoplasmic side</orientation>
    </subcellularLocation>
</comment>
<comment type="similarity">
    <text evidence="3">Belongs to the small GTPase superfamily. Ras family.</text>
</comment>
<accession>Q59XU5</accession>
<accession>A0A1D8PIN4</accession>
<sequence>MLREYKLVVVGGGGVGKSALTIQLIQSHFVDEYDPTIEDSYRKQCTIDDQQVLLDVLDTAGQEEYSAMREQYMRTGEGFLLVYSINSLNSFQELNSFYDQILRVKDSDNVPVLVVGNKCDLEMERQVSYEDGLALANSFNCPFLETSAKQRINVEEAFYGLVRNINQYNAKIAEAEKQQQQQQQQQNANQQGQDQYGQQKDNQQSQFNNQINNNNNTSAVNGGVSSDGIIDQNGNGGVSSGQANLPNQSQSQSQRQQQQQQQEPQQQSENQFSGQKQSSSKSKNGCCVIV</sequence>
<reference key="1">
    <citation type="journal article" date="2004" name="Proc. Natl. Acad. Sci. U.S.A.">
        <title>The diploid genome sequence of Candida albicans.</title>
        <authorList>
            <person name="Jones T."/>
            <person name="Federspiel N.A."/>
            <person name="Chibana H."/>
            <person name="Dungan J."/>
            <person name="Kalman S."/>
            <person name="Magee B.B."/>
            <person name="Newport G."/>
            <person name="Thorstenson Y.R."/>
            <person name="Agabian N."/>
            <person name="Magee P.T."/>
            <person name="Davis R.W."/>
            <person name="Scherer S."/>
        </authorList>
    </citation>
    <scope>NUCLEOTIDE SEQUENCE [LARGE SCALE GENOMIC DNA]</scope>
    <source>
        <strain>SC5314 / ATCC MYA-2876</strain>
    </source>
</reference>
<reference key="2">
    <citation type="journal article" date="2007" name="Genome Biol.">
        <title>Assembly of the Candida albicans genome into sixteen supercontigs aligned on the eight chromosomes.</title>
        <authorList>
            <person name="van het Hoog M."/>
            <person name="Rast T.J."/>
            <person name="Martchenko M."/>
            <person name="Grindle S."/>
            <person name="Dignard D."/>
            <person name="Hogues H."/>
            <person name="Cuomo C."/>
            <person name="Berriman M."/>
            <person name="Scherer S."/>
            <person name="Magee B.B."/>
            <person name="Whiteway M."/>
            <person name="Chibana H."/>
            <person name="Nantel A."/>
            <person name="Magee P.T."/>
        </authorList>
    </citation>
    <scope>GENOME REANNOTATION</scope>
    <source>
        <strain>SC5314 / ATCC MYA-2876</strain>
    </source>
</reference>
<reference key="3">
    <citation type="journal article" date="2013" name="Genome Biol.">
        <title>Assembly of a phased diploid Candida albicans genome facilitates allele-specific measurements and provides a simple model for repeat and indel structure.</title>
        <authorList>
            <person name="Muzzey D."/>
            <person name="Schwartz K."/>
            <person name="Weissman J.S."/>
            <person name="Sherlock G."/>
        </authorList>
    </citation>
    <scope>NUCLEOTIDE SEQUENCE [LARGE SCALE GENOMIC DNA]</scope>
    <scope>GENOME REANNOTATION</scope>
    <source>
        <strain>SC5314 / ATCC MYA-2876</strain>
    </source>
</reference>
<organism>
    <name type="scientific">Candida albicans (strain SC5314 / ATCC MYA-2876)</name>
    <name type="common">Yeast</name>
    <dbReference type="NCBI Taxonomy" id="237561"/>
    <lineage>
        <taxon>Eukaryota</taxon>
        <taxon>Fungi</taxon>
        <taxon>Dikarya</taxon>
        <taxon>Ascomycota</taxon>
        <taxon>Saccharomycotina</taxon>
        <taxon>Pichiomycetes</taxon>
        <taxon>Debaryomycetaceae</taxon>
        <taxon>Candida/Lodderomyces clade</taxon>
        <taxon>Candida</taxon>
    </lineage>
</organism>
<evidence type="ECO:0000250" key="1"/>
<evidence type="ECO:0000256" key="2">
    <source>
        <dbReference type="SAM" id="MobiDB-lite"/>
    </source>
</evidence>
<evidence type="ECO:0000305" key="3"/>
<dbReference type="EMBL" id="CP017624">
    <property type="protein sequence ID" value="AOW27998.1"/>
    <property type="molecule type" value="Genomic_DNA"/>
</dbReference>
<dbReference type="RefSeq" id="XP_714405.2">
    <property type="nucleotide sequence ID" value="XM_709312.2"/>
</dbReference>
<dbReference type="SMR" id="Q59XU5"/>
<dbReference type="BioGRID" id="1227021">
    <property type="interactions" value="4"/>
</dbReference>
<dbReference type="FunCoup" id="Q59XU5">
    <property type="interactions" value="568"/>
</dbReference>
<dbReference type="STRING" id="237561.Q59XU5"/>
<dbReference type="PeptideAtlas" id="Q59XU5"/>
<dbReference type="EnsemblFungi" id="C2_10210C_A-T">
    <property type="protein sequence ID" value="C2_10210C_A-T-p1"/>
    <property type="gene ID" value="C2_10210C_A"/>
</dbReference>
<dbReference type="GeneID" id="3643927"/>
<dbReference type="KEGG" id="cal:CAALFM_C210210CA"/>
<dbReference type="CGD" id="CAL0000184093">
    <property type="gene designation" value="RAS1"/>
</dbReference>
<dbReference type="VEuPathDB" id="FungiDB:C2_10210C_A"/>
<dbReference type="eggNOG" id="KOG0395">
    <property type="taxonomic scope" value="Eukaryota"/>
</dbReference>
<dbReference type="HOGENOM" id="CLU_041217_9_0_1"/>
<dbReference type="InParanoid" id="Q59XU5"/>
<dbReference type="OMA" id="CEFTEAS"/>
<dbReference type="OrthoDB" id="5976022at2759"/>
<dbReference type="PRO" id="PR:Q59XU5"/>
<dbReference type="Proteomes" id="UP000000559">
    <property type="component" value="Chromosome 2"/>
</dbReference>
<dbReference type="GO" id="GO:0051285">
    <property type="term" value="C:cell cortex of cell tip"/>
    <property type="evidence" value="ECO:0007669"/>
    <property type="project" value="EnsemblFungi"/>
</dbReference>
<dbReference type="GO" id="GO:0090726">
    <property type="term" value="C:cortical dynamic polarity patch"/>
    <property type="evidence" value="ECO:0007669"/>
    <property type="project" value="EnsemblFungi"/>
</dbReference>
<dbReference type="GO" id="GO:0000935">
    <property type="term" value="C:division septum"/>
    <property type="evidence" value="ECO:0007669"/>
    <property type="project" value="EnsemblFungi"/>
</dbReference>
<dbReference type="GO" id="GO:1990819">
    <property type="term" value="C:mating projection actin fusion focus"/>
    <property type="evidence" value="ECO:0007669"/>
    <property type="project" value="EnsemblFungi"/>
</dbReference>
<dbReference type="GO" id="GO:0005886">
    <property type="term" value="C:plasma membrane"/>
    <property type="evidence" value="ECO:0000314"/>
    <property type="project" value="CGD"/>
</dbReference>
<dbReference type="GO" id="GO:0002135">
    <property type="term" value="F:CTP binding"/>
    <property type="evidence" value="ECO:0007669"/>
    <property type="project" value="EnsemblFungi"/>
</dbReference>
<dbReference type="GO" id="GO:0019003">
    <property type="term" value="F:GDP binding"/>
    <property type="evidence" value="ECO:0000318"/>
    <property type="project" value="GO_Central"/>
</dbReference>
<dbReference type="GO" id="GO:0005525">
    <property type="term" value="F:GTP binding"/>
    <property type="evidence" value="ECO:0000318"/>
    <property type="project" value="GO_Central"/>
</dbReference>
<dbReference type="GO" id="GO:0003924">
    <property type="term" value="F:GTPase activity"/>
    <property type="evidence" value="ECO:0000314"/>
    <property type="project" value="CGD"/>
</dbReference>
<dbReference type="GO" id="GO:0002134">
    <property type="term" value="F:UTP binding"/>
    <property type="evidence" value="ECO:0007669"/>
    <property type="project" value="EnsemblFungi"/>
</dbReference>
<dbReference type="GO" id="GO:0019933">
    <property type="term" value="P:cAMP-mediated signaling"/>
    <property type="evidence" value="ECO:0000315"/>
    <property type="project" value="CGD"/>
</dbReference>
<dbReference type="GO" id="GO:0043709">
    <property type="term" value="P:cell adhesion involved in single-species biofilm formation"/>
    <property type="evidence" value="ECO:0000315"/>
    <property type="project" value="CGD"/>
</dbReference>
<dbReference type="GO" id="GO:0036164">
    <property type="term" value="P:cell-abiotic substrate adhesion"/>
    <property type="evidence" value="ECO:0000315"/>
    <property type="project" value="CGD"/>
</dbReference>
<dbReference type="GO" id="GO:0097308">
    <property type="term" value="P:cellular response to farnesol"/>
    <property type="evidence" value="ECO:0000315"/>
    <property type="project" value="CGD"/>
</dbReference>
<dbReference type="GO" id="GO:0071333">
    <property type="term" value="P:cellular response to glucose stimulus"/>
    <property type="evidence" value="ECO:0000315"/>
    <property type="project" value="CGD"/>
</dbReference>
<dbReference type="GO" id="GO:0034605">
    <property type="term" value="P:cellular response to heat"/>
    <property type="evidence" value="ECO:0000315"/>
    <property type="project" value="CGD"/>
</dbReference>
<dbReference type="GO" id="GO:0034599">
    <property type="term" value="P:cellular response to oxidative stress"/>
    <property type="evidence" value="ECO:0000315"/>
    <property type="project" value="CGD"/>
</dbReference>
<dbReference type="GO" id="GO:0000747">
    <property type="term" value="P:conjugation with cellular fusion"/>
    <property type="evidence" value="ECO:0007669"/>
    <property type="project" value="EnsemblFungi"/>
</dbReference>
<dbReference type="GO" id="GO:0030010">
    <property type="term" value="P:establishment of cell polarity"/>
    <property type="evidence" value="ECO:0007669"/>
    <property type="project" value="EnsemblFungi"/>
</dbReference>
<dbReference type="GO" id="GO:0030447">
    <property type="term" value="P:filamentous growth"/>
    <property type="evidence" value="ECO:0000315"/>
    <property type="project" value="CGD"/>
</dbReference>
<dbReference type="GO" id="GO:0044182">
    <property type="term" value="P:filamentous growth of a population of unicellular organisms"/>
    <property type="evidence" value="ECO:0000315"/>
    <property type="project" value="CGD"/>
</dbReference>
<dbReference type="GO" id="GO:0036180">
    <property type="term" value="P:filamentous growth of a population of unicellular organisms in response to biotic stimulus"/>
    <property type="evidence" value="ECO:0000315"/>
    <property type="project" value="CGD"/>
</dbReference>
<dbReference type="GO" id="GO:0036171">
    <property type="term" value="P:filamentous growth of a population of unicellular organisms in response to chemical stimulus"/>
    <property type="evidence" value="ECO:0000315"/>
    <property type="project" value="CGD"/>
</dbReference>
<dbReference type="GO" id="GO:0036168">
    <property type="term" value="P:filamentous growth of a population of unicellular organisms in response to heat"/>
    <property type="evidence" value="ECO:0000315"/>
    <property type="project" value="CGD"/>
</dbReference>
<dbReference type="GO" id="GO:0036166">
    <property type="term" value="P:phenotypic switching"/>
    <property type="evidence" value="ECO:0000315"/>
    <property type="project" value="CGD"/>
</dbReference>
<dbReference type="GO" id="GO:0043065">
    <property type="term" value="P:positive regulation of apoptotic process"/>
    <property type="evidence" value="ECO:0000315"/>
    <property type="project" value="CGD"/>
</dbReference>
<dbReference type="GO" id="GO:1900430">
    <property type="term" value="P:positive regulation of filamentous growth of a population of unicellular organisms"/>
    <property type="evidence" value="ECO:0000315"/>
    <property type="project" value="CGD"/>
</dbReference>
<dbReference type="GO" id="GO:1900445">
    <property type="term" value="P:positive regulation of filamentous growth of a population of unicellular organisms in response to biotic stimulus"/>
    <property type="evidence" value="ECO:0000315"/>
    <property type="project" value="CGD"/>
</dbReference>
<dbReference type="GO" id="GO:1900439">
    <property type="term" value="P:positive regulation of filamentous growth of a population of unicellular organisms in response to chemical stimulus"/>
    <property type="evidence" value="ECO:0000315"/>
    <property type="project" value="CGD"/>
</dbReference>
<dbReference type="GO" id="GO:1900433">
    <property type="term" value="P:positive regulation of filamentous growth of a population of unicellular organisms in response to heat"/>
    <property type="evidence" value="ECO:0000315"/>
    <property type="project" value="CGD"/>
</dbReference>
<dbReference type="GO" id="GO:1902917">
    <property type="term" value="P:positive regulation of mating projection assembly"/>
    <property type="evidence" value="ECO:0007669"/>
    <property type="project" value="EnsemblFungi"/>
</dbReference>
<dbReference type="GO" id="GO:1900241">
    <property type="term" value="P:positive regulation of phenotypic switching"/>
    <property type="evidence" value="ECO:0000315"/>
    <property type="project" value="CGD"/>
</dbReference>
<dbReference type="GO" id="GO:0062038">
    <property type="term" value="P:positive regulation of pheromone response MAPK cascade"/>
    <property type="evidence" value="ECO:0007669"/>
    <property type="project" value="EnsemblFungi"/>
</dbReference>
<dbReference type="GO" id="GO:0042307">
    <property type="term" value="P:positive regulation of protein import into nucleus"/>
    <property type="evidence" value="ECO:0007669"/>
    <property type="project" value="EnsemblFungi"/>
</dbReference>
<dbReference type="GO" id="GO:0072659">
    <property type="term" value="P:protein localization to plasma membrane"/>
    <property type="evidence" value="ECO:0007669"/>
    <property type="project" value="EnsemblFungi"/>
</dbReference>
<dbReference type="GO" id="GO:0007265">
    <property type="term" value="P:Ras protein signal transduction"/>
    <property type="evidence" value="ECO:0000316"/>
    <property type="project" value="CGD"/>
</dbReference>
<dbReference type="GO" id="GO:1900231">
    <property type="term" value="P:regulation of single-species biofilm formation on inanimate substrate"/>
    <property type="evidence" value="ECO:0000315"/>
    <property type="project" value="CGD"/>
</dbReference>
<dbReference type="GO" id="GO:0032005">
    <property type="term" value="P:signal transduction involved in positive regulation of conjugation with cellular fusion"/>
    <property type="evidence" value="ECO:0007669"/>
    <property type="project" value="EnsemblFungi"/>
</dbReference>
<dbReference type="GO" id="GO:0044011">
    <property type="term" value="P:single-species biofilm formation on inanimate substrate"/>
    <property type="evidence" value="ECO:0000315"/>
    <property type="project" value="CGD"/>
</dbReference>
<dbReference type="GO" id="GO:0030682">
    <property type="term" value="P:symbiont-mediated perturbation of host defenses"/>
    <property type="evidence" value="ECO:0000315"/>
    <property type="project" value="CGD"/>
</dbReference>
<dbReference type="FunFam" id="3.40.50.300:FF:000080">
    <property type="entry name" value="Ras-like GTPase Ras1"/>
    <property type="match status" value="1"/>
</dbReference>
<dbReference type="Gene3D" id="3.40.50.300">
    <property type="entry name" value="P-loop containing nucleotide triphosphate hydrolases"/>
    <property type="match status" value="1"/>
</dbReference>
<dbReference type="InterPro" id="IPR027417">
    <property type="entry name" value="P-loop_NTPase"/>
</dbReference>
<dbReference type="InterPro" id="IPR005225">
    <property type="entry name" value="Small_GTP-bd"/>
</dbReference>
<dbReference type="InterPro" id="IPR001806">
    <property type="entry name" value="Small_GTPase"/>
</dbReference>
<dbReference type="InterPro" id="IPR020849">
    <property type="entry name" value="Small_GTPase_Ras-type"/>
</dbReference>
<dbReference type="NCBIfam" id="TIGR00231">
    <property type="entry name" value="small_GTP"/>
    <property type="match status" value="1"/>
</dbReference>
<dbReference type="PANTHER" id="PTHR24070">
    <property type="entry name" value="RAS, DI-RAS, AND RHEB FAMILY MEMBERS OF SMALL GTPASE SUPERFAMILY"/>
    <property type="match status" value="1"/>
</dbReference>
<dbReference type="Pfam" id="PF00071">
    <property type="entry name" value="Ras"/>
    <property type="match status" value="1"/>
</dbReference>
<dbReference type="PRINTS" id="PR00449">
    <property type="entry name" value="RASTRNSFRMNG"/>
</dbReference>
<dbReference type="SMART" id="SM00175">
    <property type="entry name" value="RAB"/>
    <property type="match status" value="1"/>
</dbReference>
<dbReference type="SMART" id="SM00176">
    <property type="entry name" value="RAN"/>
    <property type="match status" value="1"/>
</dbReference>
<dbReference type="SMART" id="SM00173">
    <property type="entry name" value="RAS"/>
    <property type="match status" value="1"/>
</dbReference>
<dbReference type="SMART" id="SM00174">
    <property type="entry name" value="RHO"/>
    <property type="match status" value="1"/>
</dbReference>
<dbReference type="SUPFAM" id="SSF52540">
    <property type="entry name" value="P-loop containing nucleoside triphosphate hydrolases"/>
    <property type="match status" value="1"/>
</dbReference>
<dbReference type="PROSITE" id="PS51421">
    <property type="entry name" value="RAS"/>
    <property type="match status" value="1"/>
</dbReference>
<name>RAS1_CANAL</name>
<gene>
    <name type="primary">RAS1</name>
    <name type="ordered locus">CAALFM_C210210CA</name>
    <name type="ORF">CaO19.1760</name>
    <name type="ORF">CaO19.9329</name>
</gene>
<feature type="chain" id="PRO_0000413058" description="Ras-like protein 1">
    <location>
        <begin position="1"/>
        <end position="287"/>
    </location>
</feature>
<feature type="propeptide" id="PRO_0000413059" description="Removed in mature form" evidence="1">
    <location>
        <begin position="288"/>
        <end position="290"/>
    </location>
</feature>
<feature type="region of interest" description="Disordered" evidence="2">
    <location>
        <begin position="176"/>
        <end position="290"/>
    </location>
</feature>
<feature type="short sequence motif" description="Effector region">
    <location>
        <begin position="33"/>
        <end position="41"/>
    </location>
</feature>
<feature type="compositionally biased region" description="Low complexity" evidence="2">
    <location>
        <begin position="178"/>
        <end position="216"/>
    </location>
</feature>
<feature type="compositionally biased region" description="Low complexity" evidence="2">
    <location>
        <begin position="246"/>
        <end position="283"/>
    </location>
</feature>
<feature type="binding site" evidence="1">
    <location>
        <begin position="11"/>
        <end position="18"/>
    </location>
    <ligand>
        <name>GTP</name>
        <dbReference type="ChEBI" id="CHEBI:37565"/>
    </ligand>
</feature>
<feature type="binding site" evidence="1">
    <location>
        <begin position="58"/>
        <end position="62"/>
    </location>
    <ligand>
        <name>GTP</name>
        <dbReference type="ChEBI" id="CHEBI:37565"/>
    </ligand>
</feature>
<feature type="binding site" evidence="1">
    <location>
        <begin position="117"/>
        <end position="120"/>
    </location>
    <ligand>
        <name>GTP</name>
        <dbReference type="ChEBI" id="CHEBI:37565"/>
    </ligand>
</feature>
<feature type="modified residue" description="Cysteine methyl ester" evidence="1">
    <location>
        <position position="287"/>
    </location>
</feature>
<feature type="lipid moiety-binding region" description="S-palmitoyl cysteine" evidence="1">
    <location>
        <position position="286"/>
    </location>
</feature>
<feature type="lipid moiety-binding region" description="S-farnesyl cysteine" evidence="1">
    <location>
        <position position="287"/>
    </location>
</feature>
<proteinExistence type="inferred from homology"/>
<protein>
    <recommendedName>
        <fullName>Ras-like protein 1</fullName>
    </recommendedName>
    <alternativeName>
        <fullName>Ras homolog type B</fullName>
    </alternativeName>
</protein>
<keyword id="KW-1003">Cell membrane</keyword>
<keyword id="KW-0342">GTP-binding</keyword>
<keyword id="KW-0449">Lipoprotein</keyword>
<keyword id="KW-0472">Membrane</keyword>
<keyword id="KW-0488">Methylation</keyword>
<keyword id="KW-0547">Nucleotide-binding</keyword>
<keyword id="KW-0564">Palmitate</keyword>
<keyword id="KW-0636">Prenylation</keyword>
<keyword id="KW-1185">Reference proteome</keyword>